<comment type="function">
    <text evidence="2">Required for normal function of hair cells in the inner ear.</text>
</comment>
<comment type="subcellular location">
    <subcellularLocation>
        <location evidence="2">Cell projection</location>
        <location evidence="2">Stereocilium</location>
    </subcellularLocation>
</comment>
<comment type="tissue specificity">
    <text evidence="2">Expressed in the inner ear, specifically in hair cells. Higher expression is detected in the cochlea.</text>
</comment>
<proteinExistence type="evidence at transcript level"/>
<organism>
    <name type="scientific">Mus musculus</name>
    <name type="common">Mouse</name>
    <dbReference type="NCBI Taxonomy" id="10090"/>
    <lineage>
        <taxon>Eukaryota</taxon>
        <taxon>Metazoa</taxon>
        <taxon>Chordata</taxon>
        <taxon>Craniata</taxon>
        <taxon>Vertebrata</taxon>
        <taxon>Euteleostomi</taxon>
        <taxon>Mammalia</taxon>
        <taxon>Eutheria</taxon>
        <taxon>Euarchontoglires</taxon>
        <taxon>Glires</taxon>
        <taxon>Rodentia</taxon>
        <taxon>Myomorpha</taxon>
        <taxon>Muroidea</taxon>
        <taxon>Muridae</taxon>
        <taxon>Murinae</taxon>
        <taxon>Mus</taxon>
        <taxon>Mus</taxon>
    </lineage>
</organism>
<gene>
    <name type="primary">Loxhd1</name>
</gene>
<accession>C8YR32</accession>
<accession>Q8BMY5</accession>
<protein>
    <recommendedName>
        <fullName>Lipoxygenase homology domain-containing protein 1</fullName>
    </recommendedName>
</protein>
<evidence type="ECO:0000255" key="1">
    <source>
        <dbReference type="PROSITE-ProRule" id="PRU00152"/>
    </source>
</evidence>
<evidence type="ECO:0000269" key="2">
    <source>
    </source>
</evidence>
<keyword id="KW-0966">Cell projection</keyword>
<keyword id="KW-1009">Hearing</keyword>
<keyword id="KW-1185">Reference proteome</keyword>
<keyword id="KW-0677">Repeat</keyword>
<feature type="chain" id="PRO_0000393330" description="Lipoxygenase homology domain-containing protein 1">
    <location>
        <begin position="1"/>
        <end position="2068"/>
    </location>
</feature>
<feature type="domain" description="PLAT 1" evidence="1">
    <location>
        <begin position="43"/>
        <end position="160"/>
    </location>
</feature>
<feature type="domain" description="PLAT 2" evidence="1">
    <location>
        <begin position="172"/>
        <end position="287"/>
    </location>
</feature>
<feature type="domain" description="PLAT 3" evidence="1">
    <location>
        <begin position="296"/>
        <end position="412"/>
    </location>
</feature>
<feature type="domain" description="PLAT 4" evidence="1">
    <location>
        <begin position="425"/>
        <end position="540"/>
    </location>
</feature>
<feature type="domain" description="PLAT 5" evidence="1">
    <location>
        <begin position="553"/>
        <end position="673"/>
    </location>
</feature>
<feature type="domain" description="PLAT 6" evidence="1">
    <location>
        <begin position="684"/>
        <end position="803"/>
    </location>
</feature>
<feature type="domain" description="PLAT 7" evidence="1">
    <location>
        <begin position="814"/>
        <end position="934"/>
    </location>
</feature>
<feature type="domain" description="PLAT 8" evidence="1">
    <location>
        <begin position="970"/>
        <end position="1088"/>
    </location>
</feature>
<feature type="domain" description="PLAT 9" evidence="1">
    <location>
        <begin position="1101"/>
        <end position="1226"/>
    </location>
</feature>
<feature type="domain" description="PLAT 10" evidence="1">
    <location>
        <begin position="1255"/>
        <end position="1373"/>
    </location>
</feature>
<feature type="domain" description="PLAT 11" evidence="1">
    <location>
        <begin position="1422"/>
        <end position="1540"/>
    </location>
</feature>
<feature type="domain" description="PLAT 12" evidence="1">
    <location>
        <begin position="1553"/>
        <end position="1668"/>
    </location>
</feature>
<feature type="domain" description="PLAT 13" evidence="1">
    <location>
        <begin position="1680"/>
        <end position="1798"/>
    </location>
</feature>
<feature type="domain" description="PLAT 14" evidence="1">
    <location>
        <begin position="1811"/>
        <end position="1932"/>
    </location>
</feature>
<feature type="domain" description="PLAT 15" evidence="1">
    <location>
        <begin position="1949"/>
        <end position="2065"/>
    </location>
</feature>
<feature type="sequence variant" description="In the samba murine model of hearing loss." evidence="2">
    <original>I</original>
    <variation>N</variation>
    <location>
        <position position="1342"/>
    </location>
</feature>
<dbReference type="EMBL" id="FJ750876">
    <property type="protein sequence ID" value="ACV52550.1"/>
    <property type="molecule type" value="mRNA"/>
</dbReference>
<dbReference type="EMBL" id="AK007091">
    <property type="protein sequence ID" value="BAC25164.1"/>
    <property type="molecule type" value="mRNA"/>
</dbReference>
<dbReference type="CCDS" id="CCDS50326.1"/>
<dbReference type="RefSeq" id="NP_766422.2">
    <property type="nucleotide sequence ID" value="NM_172834.3"/>
</dbReference>
<dbReference type="SMR" id="C8YR32"/>
<dbReference type="BioGRID" id="232198">
    <property type="interactions" value="1"/>
</dbReference>
<dbReference type="FunCoup" id="C8YR32">
    <property type="interactions" value="6"/>
</dbReference>
<dbReference type="STRING" id="10090.ENSMUSP00000094294"/>
<dbReference type="GlyGen" id="C8YR32">
    <property type="glycosylation" value="4 sites, 1 O-linked glycan (1 site)"/>
</dbReference>
<dbReference type="iPTMnet" id="C8YR32"/>
<dbReference type="PhosphoSitePlus" id="C8YR32"/>
<dbReference type="PaxDb" id="10090-ENSMUSP00000094294"/>
<dbReference type="Antibodypedia" id="49424">
    <property type="antibodies" value="30 antibodies from 7 providers"/>
</dbReference>
<dbReference type="Ensembl" id="ENSMUST00000096547.11">
    <property type="protein sequence ID" value="ENSMUSP00000094294.4"/>
    <property type="gene ID" value="ENSMUSG00000032818.17"/>
</dbReference>
<dbReference type="GeneID" id="240411"/>
<dbReference type="KEGG" id="mmu:240411"/>
<dbReference type="UCSC" id="uc012bfd.1">
    <property type="organism name" value="mouse"/>
</dbReference>
<dbReference type="AGR" id="MGI:1914609"/>
<dbReference type="CTD" id="125336"/>
<dbReference type="MGI" id="MGI:1914609">
    <property type="gene designation" value="Loxhd1"/>
</dbReference>
<dbReference type="VEuPathDB" id="HostDB:ENSMUSG00000032818"/>
<dbReference type="eggNOG" id="KOG3599">
    <property type="taxonomic scope" value="Eukaryota"/>
</dbReference>
<dbReference type="GeneTree" id="ENSGT00390000018830"/>
<dbReference type="HOGENOM" id="CLU_000717_0_0_1"/>
<dbReference type="InParanoid" id="C8YR32"/>
<dbReference type="PhylomeDB" id="C8YR32"/>
<dbReference type="TreeFam" id="TF350466"/>
<dbReference type="BioGRID-ORCS" id="240411">
    <property type="hits" value="2 hits in 78 CRISPR screens"/>
</dbReference>
<dbReference type="PRO" id="PR:C8YR32"/>
<dbReference type="Proteomes" id="UP000000589">
    <property type="component" value="Chromosome 18"/>
</dbReference>
<dbReference type="RNAct" id="C8YR32">
    <property type="molecule type" value="protein"/>
</dbReference>
<dbReference type="Bgee" id="ENSMUSG00000032818">
    <property type="expression patterns" value="Expressed in spermatocyte and 2 other cell types or tissues"/>
</dbReference>
<dbReference type="ExpressionAtlas" id="C8YR32">
    <property type="expression patterns" value="baseline and differential"/>
</dbReference>
<dbReference type="GO" id="GO:0032420">
    <property type="term" value="C:stereocilium"/>
    <property type="evidence" value="ECO:0000314"/>
    <property type="project" value="UniProtKB"/>
</dbReference>
<dbReference type="GO" id="GO:0007605">
    <property type="term" value="P:sensory perception of sound"/>
    <property type="evidence" value="ECO:0000315"/>
    <property type="project" value="MGI"/>
</dbReference>
<dbReference type="CDD" id="cd01756">
    <property type="entry name" value="PLAT_repeat"/>
    <property type="match status" value="13"/>
</dbReference>
<dbReference type="FunFam" id="2.40.180.10:FF:000004">
    <property type="entry name" value="Lipoxygenase homology domain-containing protein 1"/>
    <property type="match status" value="1"/>
</dbReference>
<dbReference type="FunFam" id="2.40.180.10:FF:000009">
    <property type="entry name" value="Lipoxygenase homology domain-containing protein 1"/>
    <property type="match status" value="1"/>
</dbReference>
<dbReference type="FunFam" id="2.40.180.10:FF:000011">
    <property type="entry name" value="Lipoxygenase homology domain-containing protein 1"/>
    <property type="match status" value="1"/>
</dbReference>
<dbReference type="FunFam" id="2.60.60.20:FF:000004">
    <property type="entry name" value="Lipoxygenase homology domain-containing protein 1"/>
    <property type="match status" value="1"/>
</dbReference>
<dbReference type="FunFam" id="2.60.60.20:FF:000007">
    <property type="entry name" value="Lipoxygenase homology domain-containing protein 1"/>
    <property type="match status" value="1"/>
</dbReference>
<dbReference type="FunFam" id="2.60.60.20:FF:000011">
    <property type="entry name" value="Lipoxygenase homology domain-containing protein 1"/>
    <property type="match status" value="1"/>
</dbReference>
<dbReference type="FunFam" id="2.40.180.10:FF:000005">
    <property type="entry name" value="lipoxygenase homology domain-containing protein 1"/>
    <property type="match status" value="1"/>
</dbReference>
<dbReference type="FunFam" id="2.40.180.10:FF:000006">
    <property type="entry name" value="lipoxygenase homology domain-containing protein 1"/>
    <property type="match status" value="1"/>
</dbReference>
<dbReference type="FunFam" id="2.40.180.10:FF:000007">
    <property type="entry name" value="lipoxygenase homology domain-containing protein 1"/>
    <property type="match status" value="1"/>
</dbReference>
<dbReference type="FunFam" id="2.40.180.10:FF:000008">
    <property type="entry name" value="lipoxygenase homology domain-containing protein 1"/>
    <property type="match status" value="1"/>
</dbReference>
<dbReference type="FunFam" id="2.40.180.10:FF:000010">
    <property type="entry name" value="lipoxygenase homology domain-containing protein 1"/>
    <property type="match status" value="1"/>
</dbReference>
<dbReference type="FunFam" id="2.60.60.20:FF:000013">
    <property type="entry name" value="lipoxygenase homology domain-containing protein 1"/>
    <property type="match status" value="1"/>
</dbReference>
<dbReference type="Gene3D" id="2.40.180.10">
    <property type="entry name" value="Catalase core domain"/>
    <property type="match status" value="9"/>
</dbReference>
<dbReference type="Gene3D" id="2.60.60.20">
    <property type="entry name" value="PLAT/LH2 domain"/>
    <property type="match status" value="6"/>
</dbReference>
<dbReference type="InterPro" id="IPR052970">
    <property type="entry name" value="Inner_ear_hair_cell_LOXHD"/>
</dbReference>
<dbReference type="InterPro" id="IPR001024">
    <property type="entry name" value="PLAT/LH2_dom"/>
</dbReference>
<dbReference type="InterPro" id="IPR036392">
    <property type="entry name" value="PLAT/LH2_dom_sf"/>
</dbReference>
<dbReference type="PANTHER" id="PTHR45901:SF3">
    <property type="entry name" value="LIPOXYGENASE HOMOLOGY DOMAIN-CONTAINING PROTEIN 1"/>
    <property type="match status" value="1"/>
</dbReference>
<dbReference type="PANTHER" id="PTHR45901">
    <property type="entry name" value="PROTEIN CBG12474"/>
    <property type="match status" value="1"/>
</dbReference>
<dbReference type="Pfam" id="PF01477">
    <property type="entry name" value="PLAT"/>
    <property type="match status" value="15"/>
</dbReference>
<dbReference type="SMART" id="SM00308">
    <property type="entry name" value="LH2"/>
    <property type="match status" value="13"/>
</dbReference>
<dbReference type="SUPFAM" id="SSF49723">
    <property type="entry name" value="Lipase/lipooxygenase domain (PLAT/LH2 domain)"/>
    <property type="match status" value="15"/>
</dbReference>
<dbReference type="PROSITE" id="PS50095">
    <property type="entry name" value="PLAT"/>
    <property type="match status" value="15"/>
</dbReference>
<name>LOXH1_MOUSE</name>
<sequence>MMAQKKKRRKKDIDFLGLYEEELLNYDSEDGEDELEHEYYKAKVYEVVTATGDVRGAGTDANVFITLFGENGLSPKLHLTSKSESAFEKANVDVFRVRTNNVGLIYKIRIEHDNTGLNASWYLDRVIVTDMKRPHLRYYFNCNNWLSKVEGDRQWCRDLLASFDPMDMPRGNKYEIKVYTGDVIGAGTDADVFINIFGEYGDTGERRLENEKDNFEKGAEDKFTLDAPDLGQLMKINVGHNNKGGSAGWFLSKIIIEDIGNKRKYDFPLNRWLALDEDDGKIQRDILVGGAETTAITYIVTVFTGDIRGAGTKSKIYLVMYGARGNKNSGKIFLEGGVFDRGRTDIFHIDLAVLLSPLSRVSIGHGNIGVNRGWYCEKVVILCPFTGIQQTFPCSNWLDEKKADGLIERQLYEMVSLRKKRLKKYPWSLWVWTTDLKKAGTNSPIFIQIYGKKGRTDEILLNPNNKWFKPGIIEKFRMELPDLGRFYKIRAWHDRQNPGSGWHLEKMTLMNTINKDKYNFNCNRWLDANEDDNEIVREMTAEGPTVRRIMGMARYRVTVCTGELEGAGTDANVYLCLFGDVGDTGERLLYNCRNNTDLFEKGNADEFTIESVTMRKVRRVRVRHDGKGSGSGWYLDRVLVREEGQPESDNVEFPCLRWLDKDKDDGQLVRELLPSDSNATLKNFRYHISVKTGDVSGASTDSRVYIKLYGEKSDTIKQVLLVSDNNLKDYFERGRVDEFTLETLNIGTINRLVIGHDSTGMHAGWFLGSVQIRVPRQGKQYTFPANRWLDKNQADGRLEVELYPSEVVEIQKLVHYEIEIWTGDVGGAGTTSRVFVQIYGEEGKTEVLFLSSRSKVFDRGSKDIFQTDTFTIYAIDLGALTKIRIRHDNTGNRPGWFLDRVDITDVNNETTYYFPCQRWLAVEEDDGQLSRELLPVDESYVLPSEDEEGGGQGDNNPLDNLALEQKDKSTTFSVTIKTGDKKNAGTDANVFITLFGTQDNNGMTLLKSSKTNSDKFERDSIEIFTVETLDLGDLWKVRIGHDNTGKAPGWFVDWVEVDAPSLGKCMTFPCGRWLAKNEDDGSIVRDLFHAELQTRLYTPFVPYEITLYTSDVFAAGTDANIFIVIYGCDAVCTRQKFLCTNKREQKLFFERKSASRFIVELEDVGEIIEKIRIGHDNTGINPGWHCSHVDIRRLLPEKDGTETLTFPCDRWLATSEDDKKTIRELVPYDIFTEKYMKDGSLRQVYKEVEEPLDIVLYSVQIFTGNVPGAGTDAKVYITIYGDLGDTGERYLGKSENRTNKFEKGTADTFIIEAADLGVIYKIKLRHDNTKWCADWYVEKVEIWNDTNEDEFLFLCGRWLSLKKEDGRLERLFYEKEYTGDRSSNCSSPADFWEIALSSKMADVDIDTVTGPMVDYVQDGPVIPYYVSVTTGKHKEAATDSRAFVLLIGEDDECTNRIWLDYPQGKRGFSCGSVEEFYVGGLDVGIIKKIELGHDGASPESCWLVEELCLAVPTQGTKYTLRCNCWLAKDRGDGVTSRVFDLLDAMVVNIGKKVLYEMTVWTGDVVGGGTDSNIFMTLYGINGSTEEVQLDKKKARFEREQNDTFIMEILDIAPFTKMRIRIDGMGSRPEWFLERILLKNMNTGDLTMFYYGDWLSQKKGKKTLVCEICAVIDGEEMMEWTSYTVSVKTSDILGAGTDANVFIIIFGENGDSGTLALKQSANWNKFERNNTDTFNFSDMLSLGHLCKLRVWHDNKGIFPGWHLSYVDVKDNSRDETFRFQCDCWLSKSEGDRQTLRDFACANNEIRDELEETTYEIVIETGNGGETRENVWLILEGRKNRSKEFLVENSSRQRAFRKGTTDTFEFDSIFLGDIASLCVGHLAREDRFIPKRELVWHVKTITITEMEYGNVYFFNCDCLIPLKRKRKYFKVFEVTKTTESFASKIQSLVPVKYEVIVTTGYEPGAGTDANVFVTIFGANGDTGKRELKQKMRNLFERGSTDRFFLETLELGELRKVRLEHDSSGYYSGWLVEKVEVTNTSTGVATIFSCGRWLDKSRGDGLTWRELFPSV</sequence>
<reference key="1">
    <citation type="journal article" date="2009" name="Am. J. Hum. Genet.">
        <title>Mutations in LOXHD1, an evolutionarily conserved stereociliary protein, disrupt hair cell function in mice and cause progressive hearing loss in humans.</title>
        <authorList>
            <person name="Grillet N."/>
            <person name="Schwander M."/>
            <person name="Hildebrand M.S."/>
            <person name="Sczaniecka A."/>
            <person name="Kolatkar A."/>
            <person name="Velasco J."/>
            <person name="Webster J.A."/>
            <person name="Kahrizi K."/>
            <person name="Najmabadi H."/>
            <person name="Kimberling W.J."/>
            <person name="Stephan D."/>
            <person name="Bahlo M."/>
            <person name="Wiltshire T."/>
            <person name="Tarantino L.M."/>
            <person name="Kuhn P."/>
            <person name="Smith R.J.H."/>
            <person name="Mueller U."/>
        </authorList>
    </citation>
    <scope>NUCLEOTIDE SEQUENCE [MRNA]</scope>
    <scope>FUNCTION</scope>
    <scope>TISSUE SPECIFICITY</scope>
    <scope>SUBCELLULAR LOCATION</scope>
    <scope>VARIANT ASN-1342</scope>
    <source>
        <strain>C57BL/6J</strain>
        <tissue>Organ of Corti</tissue>
    </source>
</reference>
<reference key="2">
    <citation type="journal article" date="2005" name="Science">
        <title>The transcriptional landscape of the mammalian genome.</title>
        <authorList>
            <person name="Carninci P."/>
            <person name="Kasukawa T."/>
            <person name="Katayama S."/>
            <person name="Gough J."/>
            <person name="Frith M.C."/>
            <person name="Maeda N."/>
            <person name="Oyama R."/>
            <person name="Ravasi T."/>
            <person name="Lenhard B."/>
            <person name="Wells C."/>
            <person name="Kodzius R."/>
            <person name="Shimokawa K."/>
            <person name="Bajic V.B."/>
            <person name="Brenner S.E."/>
            <person name="Batalov S."/>
            <person name="Forrest A.R."/>
            <person name="Zavolan M."/>
            <person name="Davis M.J."/>
            <person name="Wilming L.G."/>
            <person name="Aidinis V."/>
            <person name="Allen J.E."/>
            <person name="Ambesi-Impiombato A."/>
            <person name="Apweiler R."/>
            <person name="Aturaliya R.N."/>
            <person name="Bailey T.L."/>
            <person name="Bansal M."/>
            <person name="Baxter L."/>
            <person name="Beisel K.W."/>
            <person name="Bersano T."/>
            <person name="Bono H."/>
            <person name="Chalk A.M."/>
            <person name="Chiu K.P."/>
            <person name="Choudhary V."/>
            <person name="Christoffels A."/>
            <person name="Clutterbuck D.R."/>
            <person name="Crowe M.L."/>
            <person name="Dalla E."/>
            <person name="Dalrymple B.P."/>
            <person name="de Bono B."/>
            <person name="Della Gatta G."/>
            <person name="di Bernardo D."/>
            <person name="Down T."/>
            <person name="Engstrom P."/>
            <person name="Fagiolini M."/>
            <person name="Faulkner G."/>
            <person name="Fletcher C.F."/>
            <person name="Fukushima T."/>
            <person name="Furuno M."/>
            <person name="Futaki S."/>
            <person name="Gariboldi M."/>
            <person name="Georgii-Hemming P."/>
            <person name="Gingeras T.R."/>
            <person name="Gojobori T."/>
            <person name="Green R.E."/>
            <person name="Gustincich S."/>
            <person name="Harbers M."/>
            <person name="Hayashi Y."/>
            <person name="Hensch T.K."/>
            <person name="Hirokawa N."/>
            <person name="Hill D."/>
            <person name="Huminiecki L."/>
            <person name="Iacono M."/>
            <person name="Ikeo K."/>
            <person name="Iwama A."/>
            <person name="Ishikawa T."/>
            <person name="Jakt M."/>
            <person name="Kanapin A."/>
            <person name="Katoh M."/>
            <person name="Kawasawa Y."/>
            <person name="Kelso J."/>
            <person name="Kitamura H."/>
            <person name="Kitano H."/>
            <person name="Kollias G."/>
            <person name="Krishnan S.P."/>
            <person name="Kruger A."/>
            <person name="Kummerfeld S.K."/>
            <person name="Kurochkin I.V."/>
            <person name="Lareau L.F."/>
            <person name="Lazarevic D."/>
            <person name="Lipovich L."/>
            <person name="Liu J."/>
            <person name="Liuni S."/>
            <person name="McWilliam S."/>
            <person name="Madan Babu M."/>
            <person name="Madera M."/>
            <person name="Marchionni L."/>
            <person name="Matsuda H."/>
            <person name="Matsuzawa S."/>
            <person name="Miki H."/>
            <person name="Mignone F."/>
            <person name="Miyake S."/>
            <person name="Morris K."/>
            <person name="Mottagui-Tabar S."/>
            <person name="Mulder N."/>
            <person name="Nakano N."/>
            <person name="Nakauchi H."/>
            <person name="Ng P."/>
            <person name="Nilsson R."/>
            <person name="Nishiguchi S."/>
            <person name="Nishikawa S."/>
            <person name="Nori F."/>
            <person name="Ohara O."/>
            <person name="Okazaki Y."/>
            <person name="Orlando V."/>
            <person name="Pang K.C."/>
            <person name="Pavan W.J."/>
            <person name="Pavesi G."/>
            <person name="Pesole G."/>
            <person name="Petrovsky N."/>
            <person name="Piazza S."/>
            <person name="Reed J."/>
            <person name="Reid J.F."/>
            <person name="Ring B.Z."/>
            <person name="Ringwald M."/>
            <person name="Rost B."/>
            <person name="Ruan Y."/>
            <person name="Salzberg S.L."/>
            <person name="Sandelin A."/>
            <person name="Schneider C."/>
            <person name="Schoenbach C."/>
            <person name="Sekiguchi K."/>
            <person name="Semple C.A."/>
            <person name="Seno S."/>
            <person name="Sessa L."/>
            <person name="Sheng Y."/>
            <person name="Shibata Y."/>
            <person name="Shimada H."/>
            <person name="Shimada K."/>
            <person name="Silva D."/>
            <person name="Sinclair B."/>
            <person name="Sperling S."/>
            <person name="Stupka E."/>
            <person name="Sugiura K."/>
            <person name="Sultana R."/>
            <person name="Takenaka Y."/>
            <person name="Taki K."/>
            <person name="Tammoja K."/>
            <person name="Tan S.L."/>
            <person name="Tang S."/>
            <person name="Taylor M.S."/>
            <person name="Tegner J."/>
            <person name="Teichmann S.A."/>
            <person name="Ueda H.R."/>
            <person name="van Nimwegen E."/>
            <person name="Verardo R."/>
            <person name="Wei C.L."/>
            <person name="Yagi K."/>
            <person name="Yamanishi H."/>
            <person name="Zabarovsky E."/>
            <person name="Zhu S."/>
            <person name="Zimmer A."/>
            <person name="Hide W."/>
            <person name="Bult C."/>
            <person name="Grimmond S.M."/>
            <person name="Teasdale R.D."/>
            <person name="Liu E.T."/>
            <person name="Brusic V."/>
            <person name="Quackenbush J."/>
            <person name="Wahlestedt C."/>
            <person name="Mattick J.S."/>
            <person name="Hume D.A."/>
            <person name="Kai C."/>
            <person name="Sasaki D."/>
            <person name="Tomaru Y."/>
            <person name="Fukuda S."/>
            <person name="Kanamori-Katayama M."/>
            <person name="Suzuki M."/>
            <person name="Aoki J."/>
            <person name="Arakawa T."/>
            <person name="Iida J."/>
            <person name="Imamura K."/>
            <person name="Itoh M."/>
            <person name="Kato T."/>
            <person name="Kawaji H."/>
            <person name="Kawagashira N."/>
            <person name="Kawashima T."/>
            <person name="Kojima M."/>
            <person name="Kondo S."/>
            <person name="Konno H."/>
            <person name="Nakano K."/>
            <person name="Ninomiya N."/>
            <person name="Nishio T."/>
            <person name="Okada M."/>
            <person name="Plessy C."/>
            <person name="Shibata K."/>
            <person name="Shiraki T."/>
            <person name="Suzuki S."/>
            <person name="Tagami M."/>
            <person name="Waki K."/>
            <person name="Watahiki A."/>
            <person name="Okamura-Oho Y."/>
            <person name="Suzuki H."/>
            <person name="Kawai J."/>
            <person name="Hayashizaki Y."/>
        </authorList>
    </citation>
    <scope>NUCLEOTIDE SEQUENCE [LARGE SCALE MRNA] OF 1948-2068</scope>
    <source>
        <strain>C57BL/6J</strain>
        <tissue>Testis</tissue>
    </source>
</reference>